<sequence length="654" mass="76175">MTQITEKELKKKYLDLLSQNFDTPEKLATEIINLESILELPKGTEHFVSDLHGEYEAFQHVLRNGSGNVRAKINDIFKERLSTKELNDLTALVYYPEDKLKLIKSDFQNCGQLNVWYITTIEHLIELIKYCSSKYTRSKLRKALPKQYVYIIEELLYKSNEYQNKKSYYETLVNQVIELKQADDLIIGLAYSVQRLVVDHLHVVGDIYDRGPQPDKIMDTLINYHSLDIQWGNHDVLWVGAYAGSKVCLANLLRICARYDNLDIIEDAYGINLRPLLTLAEKYYDADNPAFKPKKRPDKHERLTQREESQITKIHQAIAMIQFKLEIPIIKRRPNFEMEERLVLEKVNYDTNEITVYGNTYPLKDTCFQTVNRDNPAELLPEEEEVMNKLLLSFQQSEKLRRHMSFLMRKGSLYLPYNGNLLIHGCIPVDENGEMESFEIDGHTYSGQELLDVFEYHVRKSFDEKENTDDLSTDLVWYLWTGKYSSLFGKRAMTTFERYFIADKASHKEEKNPYYHLREDVNMVRKMLSDFGLNPDEGRIINGHTPVKEINGEDPIKADGKMLVIDGGFSKAYQSTTGIAGYTLLYNSFGMQLVAHQQFNAKEKILSEGIDELSIKRVVDKELQRKKIRDTNIGKDLQAQIDILKMLMHDRYLD</sequence>
<comment type="catalytic activity">
    <reaction evidence="1">
        <text>beta-D-fructose 1,6-bisphosphate + H2O = beta-D-fructose 6-phosphate + phosphate</text>
        <dbReference type="Rhea" id="RHEA:11064"/>
        <dbReference type="ChEBI" id="CHEBI:15377"/>
        <dbReference type="ChEBI" id="CHEBI:32966"/>
        <dbReference type="ChEBI" id="CHEBI:43474"/>
        <dbReference type="ChEBI" id="CHEBI:57634"/>
        <dbReference type="EC" id="3.1.3.11"/>
    </reaction>
</comment>
<comment type="cofactor">
    <cofactor evidence="1">
        <name>Mn(2+)</name>
        <dbReference type="ChEBI" id="CHEBI:29035"/>
    </cofactor>
</comment>
<comment type="pathway">
    <text evidence="1">Carbohydrate biosynthesis; gluconeogenesis.</text>
</comment>
<comment type="similarity">
    <text evidence="1">Belongs to the FBPase class 3 family.</text>
</comment>
<dbReference type="EC" id="3.1.3.11" evidence="1"/>
<dbReference type="EMBL" id="CP000255">
    <property type="protein sequence ID" value="ABD21316.1"/>
    <property type="molecule type" value="Genomic_DNA"/>
</dbReference>
<dbReference type="RefSeq" id="WP_000192168.1">
    <property type="nucleotide sequence ID" value="NZ_CP027476.1"/>
</dbReference>
<dbReference type="KEGG" id="saa:SAUSA300_2455"/>
<dbReference type="HOGENOM" id="CLU_028392_2_0_9"/>
<dbReference type="OMA" id="AKMHKAI"/>
<dbReference type="UniPathway" id="UPA00138"/>
<dbReference type="Proteomes" id="UP000001939">
    <property type="component" value="Chromosome"/>
</dbReference>
<dbReference type="GO" id="GO:0042132">
    <property type="term" value="F:fructose 1,6-bisphosphate 1-phosphatase activity"/>
    <property type="evidence" value="ECO:0007669"/>
    <property type="project" value="UniProtKB-UniRule"/>
</dbReference>
<dbReference type="GO" id="GO:0006094">
    <property type="term" value="P:gluconeogenesis"/>
    <property type="evidence" value="ECO:0007669"/>
    <property type="project" value="UniProtKB-UniRule"/>
</dbReference>
<dbReference type="Gene3D" id="3.60.21.10">
    <property type="match status" value="1"/>
</dbReference>
<dbReference type="HAMAP" id="MF_01854">
    <property type="entry name" value="FBPase_class3"/>
    <property type="match status" value="1"/>
</dbReference>
<dbReference type="InterPro" id="IPR009164">
    <property type="entry name" value="FBPtase_class3"/>
</dbReference>
<dbReference type="InterPro" id="IPR029052">
    <property type="entry name" value="Metallo-depent_PP-like"/>
</dbReference>
<dbReference type="Pfam" id="PF06874">
    <property type="entry name" value="FBPase_2"/>
    <property type="match status" value="1"/>
</dbReference>
<dbReference type="PIRSF" id="PIRSF000906">
    <property type="entry name" value="FBPtase_Bacill"/>
    <property type="match status" value="1"/>
</dbReference>
<dbReference type="SUPFAM" id="SSF56300">
    <property type="entry name" value="Metallo-dependent phosphatases"/>
    <property type="match status" value="2"/>
</dbReference>
<accession>Q2FDY9</accession>
<keyword id="KW-0119">Carbohydrate metabolism</keyword>
<keyword id="KW-0378">Hydrolase</keyword>
<keyword id="KW-0464">Manganese</keyword>
<organism>
    <name type="scientific">Staphylococcus aureus (strain USA300)</name>
    <dbReference type="NCBI Taxonomy" id="367830"/>
    <lineage>
        <taxon>Bacteria</taxon>
        <taxon>Bacillati</taxon>
        <taxon>Bacillota</taxon>
        <taxon>Bacilli</taxon>
        <taxon>Bacillales</taxon>
        <taxon>Staphylococcaceae</taxon>
        <taxon>Staphylococcus</taxon>
    </lineage>
</organism>
<name>F16PC_STAA3</name>
<reference key="1">
    <citation type="journal article" date="2006" name="Lancet">
        <title>Complete genome sequence of USA300, an epidemic clone of community-acquired meticillin-resistant Staphylococcus aureus.</title>
        <authorList>
            <person name="Diep B.A."/>
            <person name="Gill S.R."/>
            <person name="Chang R.F."/>
            <person name="Phan T.H."/>
            <person name="Chen J.H."/>
            <person name="Davidson M.G."/>
            <person name="Lin F."/>
            <person name="Lin J."/>
            <person name="Carleton H.A."/>
            <person name="Mongodin E.F."/>
            <person name="Sensabaugh G.F."/>
            <person name="Perdreau-Remington F."/>
        </authorList>
    </citation>
    <scope>NUCLEOTIDE SEQUENCE [LARGE SCALE GENOMIC DNA]</scope>
    <source>
        <strain>USA300</strain>
    </source>
</reference>
<protein>
    <recommendedName>
        <fullName evidence="1">Fructose-1,6-bisphosphatase class 3</fullName>
        <shortName evidence="1">FBPase class 3</shortName>
        <ecNumber evidence="1">3.1.3.11</ecNumber>
    </recommendedName>
    <alternativeName>
        <fullName evidence="1">D-fructose-1,6-bisphosphate 1-phosphohydrolase class 3</fullName>
    </alternativeName>
</protein>
<evidence type="ECO:0000255" key="1">
    <source>
        <dbReference type="HAMAP-Rule" id="MF_01854"/>
    </source>
</evidence>
<evidence type="ECO:0000256" key="2">
    <source>
        <dbReference type="SAM" id="MobiDB-lite"/>
    </source>
</evidence>
<proteinExistence type="inferred from homology"/>
<feature type="chain" id="PRO_0000359995" description="Fructose-1,6-bisphosphatase class 3">
    <location>
        <begin position="1"/>
        <end position="654"/>
    </location>
</feature>
<feature type="region of interest" description="Disordered" evidence="2">
    <location>
        <begin position="288"/>
        <end position="307"/>
    </location>
</feature>
<feature type="compositionally biased region" description="Basic and acidic residues" evidence="2">
    <location>
        <begin position="298"/>
        <end position="307"/>
    </location>
</feature>
<gene>
    <name evidence="1" type="primary">fbp</name>
    <name type="ordered locus">SAUSA300_2455</name>
</gene>